<proteinExistence type="evidence at transcript level"/>
<name>NPY1R_SHEEP</name>
<comment type="function">
    <text>Receptor for neuropeptide Y and peptide YY.</text>
</comment>
<comment type="subcellular location">
    <subcellularLocation>
        <location>Cell membrane</location>
        <topology>Multi-pass membrane protein</topology>
    </subcellularLocation>
</comment>
<comment type="similarity">
    <text evidence="2">Belongs to the G-protein coupled receptor 1 family.</text>
</comment>
<keyword id="KW-1003">Cell membrane</keyword>
<keyword id="KW-0297">G-protein coupled receptor</keyword>
<keyword id="KW-0325">Glycoprotein</keyword>
<keyword id="KW-0449">Lipoprotein</keyword>
<keyword id="KW-0472">Membrane</keyword>
<keyword id="KW-0564">Palmitate</keyword>
<keyword id="KW-0675">Receptor</keyword>
<keyword id="KW-1185">Reference proteome</keyword>
<keyword id="KW-0807">Transducer</keyword>
<keyword id="KW-0812">Transmembrane</keyword>
<keyword id="KW-1133">Transmembrane helix</keyword>
<gene>
    <name type="primary">NPY1R</name>
</gene>
<protein>
    <recommendedName>
        <fullName>Neuropeptide Y receptor type 1</fullName>
        <shortName>NPY1-R</shortName>
    </recommendedName>
</protein>
<dbReference type="EMBL" id="U62122">
    <property type="protein sequence ID" value="AAB51032.1"/>
    <property type="molecule type" value="mRNA"/>
</dbReference>
<dbReference type="SMR" id="Q28602"/>
<dbReference type="STRING" id="9940.ENSOARP00000014658"/>
<dbReference type="GlyCosmos" id="Q28602">
    <property type="glycosylation" value="1 site, No reported glycans"/>
</dbReference>
<dbReference type="PaxDb" id="9940-ENSOARP00000014658"/>
<dbReference type="eggNOG" id="KOG3656">
    <property type="taxonomic scope" value="Eukaryota"/>
</dbReference>
<dbReference type="Proteomes" id="UP000002356">
    <property type="component" value="Unplaced"/>
</dbReference>
<dbReference type="GO" id="GO:0043005">
    <property type="term" value="C:neuron projection"/>
    <property type="evidence" value="ECO:0007669"/>
    <property type="project" value="TreeGrafter"/>
</dbReference>
<dbReference type="GO" id="GO:0005886">
    <property type="term" value="C:plasma membrane"/>
    <property type="evidence" value="ECO:0007669"/>
    <property type="project" value="UniProtKB-SubCell"/>
</dbReference>
<dbReference type="GO" id="GO:0042923">
    <property type="term" value="F:neuropeptide binding"/>
    <property type="evidence" value="ECO:0007669"/>
    <property type="project" value="TreeGrafter"/>
</dbReference>
<dbReference type="GO" id="GO:0008188">
    <property type="term" value="F:neuropeptide receptor activity"/>
    <property type="evidence" value="ECO:0007669"/>
    <property type="project" value="TreeGrafter"/>
</dbReference>
<dbReference type="Gene3D" id="1.20.1070.10">
    <property type="entry name" value="Rhodopsin 7-helix transmembrane proteins"/>
    <property type="match status" value="1"/>
</dbReference>
<dbReference type="InterPro" id="IPR000276">
    <property type="entry name" value="GPCR_Rhodpsn"/>
</dbReference>
<dbReference type="InterPro" id="IPR017452">
    <property type="entry name" value="GPCR_Rhodpsn_7TM"/>
</dbReference>
<dbReference type="PANTHER" id="PTHR24235">
    <property type="entry name" value="NEUROPEPTIDE Y RECEPTOR"/>
    <property type="match status" value="1"/>
</dbReference>
<dbReference type="PANTHER" id="PTHR24235:SF24">
    <property type="entry name" value="NEUROPEPTIDE Y RECEPTOR TYPE 1"/>
    <property type="match status" value="1"/>
</dbReference>
<dbReference type="Pfam" id="PF00001">
    <property type="entry name" value="7tm_1"/>
    <property type="match status" value="1"/>
</dbReference>
<dbReference type="PRINTS" id="PR00237">
    <property type="entry name" value="GPCRRHODOPSN"/>
</dbReference>
<dbReference type="SUPFAM" id="SSF81321">
    <property type="entry name" value="Family A G protein-coupled receptor-like"/>
    <property type="match status" value="1"/>
</dbReference>
<dbReference type="PROSITE" id="PS50262">
    <property type="entry name" value="G_PROTEIN_RECEP_F1_2"/>
    <property type="match status" value="1"/>
</dbReference>
<reference key="1">
    <citation type="journal article" date="1997" name="Domest. Anim. Endocrinol.">
        <title>cDNA cloning and tissue-specific gene expression of ovine leptin, NPY-Y1 receptor, and NPY-Y2 receptor.</title>
        <authorList>
            <person name="Dyer C.J."/>
            <person name="Simmons J.M."/>
            <person name="Matteri R.L."/>
            <person name="Keisler D.H."/>
        </authorList>
    </citation>
    <scope>NUCLEOTIDE SEQUENCE [MRNA]</scope>
    <source>
        <tissue>Hypothalamus</tissue>
    </source>
</reference>
<sequence length="116" mass="13690">LVLIAVERHQLIINPRGWRPSNRHAYVGIAVIWVLAVASSLPFLIYQVLTDEPFQNVTLDAFKDKYVCFDKFPSDSHRLSYTTLLLVLQYFGPLCFIFICYFKIYIRLKRRNNMMD</sequence>
<feature type="chain" id="PRO_0000069924" description="Neuropeptide Y receptor type 1">
    <location>
        <begin position="1" status="less than"/>
        <end position="116" status="greater than"/>
    </location>
</feature>
<feature type="transmembrane region" description="Helical; Name=3" evidence="1">
    <location>
        <begin position="1" status="less than"/>
        <end position="6"/>
    </location>
</feature>
<feature type="topological domain" description="Cytoplasmic" evidence="1">
    <location>
        <begin position="7"/>
        <end position="24"/>
    </location>
</feature>
<feature type="transmembrane region" description="Helical" evidence="1">
    <location>
        <begin position="25"/>
        <end position="45"/>
    </location>
</feature>
<feature type="topological domain" description="Extracellular" evidence="1">
    <location>
        <begin position="46"/>
        <end position="81"/>
    </location>
</feature>
<feature type="transmembrane region" description="Helical" evidence="1">
    <location>
        <begin position="82"/>
        <end position="102"/>
    </location>
</feature>
<feature type="topological domain" description="Cytoplasmic" evidence="1">
    <location>
        <begin position="103"/>
        <end position="116" status="greater than"/>
    </location>
</feature>
<feature type="glycosylation site" description="N-linked (GlcNAc...) asparagine" evidence="1">
    <location>
        <position position="56"/>
    </location>
</feature>
<feature type="non-terminal residue">
    <location>
        <position position="1"/>
    </location>
</feature>
<feature type="non-terminal residue">
    <location>
        <position position="116"/>
    </location>
</feature>
<organism>
    <name type="scientific">Ovis aries</name>
    <name type="common">Sheep</name>
    <dbReference type="NCBI Taxonomy" id="9940"/>
    <lineage>
        <taxon>Eukaryota</taxon>
        <taxon>Metazoa</taxon>
        <taxon>Chordata</taxon>
        <taxon>Craniata</taxon>
        <taxon>Vertebrata</taxon>
        <taxon>Euteleostomi</taxon>
        <taxon>Mammalia</taxon>
        <taxon>Eutheria</taxon>
        <taxon>Laurasiatheria</taxon>
        <taxon>Artiodactyla</taxon>
        <taxon>Ruminantia</taxon>
        <taxon>Pecora</taxon>
        <taxon>Bovidae</taxon>
        <taxon>Caprinae</taxon>
        <taxon>Ovis</taxon>
    </lineage>
</organism>
<accession>Q28602</accession>
<evidence type="ECO:0000255" key="1"/>
<evidence type="ECO:0000255" key="2">
    <source>
        <dbReference type="PROSITE-ProRule" id="PRU00521"/>
    </source>
</evidence>